<keyword id="KW-0687">Ribonucleoprotein</keyword>
<keyword id="KW-0689">Ribosomal protein</keyword>
<keyword id="KW-0694">RNA-binding</keyword>
<keyword id="KW-0699">rRNA-binding</keyword>
<proteinExistence type="inferred from homology"/>
<protein>
    <recommendedName>
        <fullName evidence="1">Small ribosomal subunit protein uS5</fullName>
    </recommendedName>
    <alternativeName>
        <fullName evidence="3">30S ribosomal protein S5</fullName>
    </alternativeName>
</protein>
<sequence length="191" mass="20655">MAAERERGGRERSREREERDSEFVDKLVHINRVAKVVKGGKRFGFAALVVVGDQKGRVGFGHGKAREVPEAIRKATESAKRNLTRVALREGRTLHHDIAGRHGAGRVYLRAAPAGTGIIAGGPMRAVFETLGIADVVAKSVGSSNPYNMVRATFDALKHLDSPRSVAARRNIKVSTLQARRVGGDAEVVAE</sequence>
<evidence type="ECO:0000255" key="1">
    <source>
        <dbReference type="HAMAP-Rule" id="MF_01307"/>
    </source>
</evidence>
<evidence type="ECO:0000256" key="2">
    <source>
        <dbReference type="SAM" id="MobiDB-lite"/>
    </source>
</evidence>
<evidence type="ECO:0000305" key="3"/>
<feature type="chain" id="PRO_1000140890" description="Small ribosomal subunit protein uS5">
    <location>
        <begin position="1"/>
        <end position="191"/>
    </location>
</feature>
<feature type="domain" description="S5 DRBM" evidence="1">
    <location>
        <begin position="23"/>
        <end position="86"/>
    </location>
</feature>
<feature type="region of interest" description="Disordered" evidence="2">
    <location>
        <begin position="1"/>
        <end position="21"/>
    </location>
</feature>
<accession>B3QBW3</accession>
<dbReference type="EMBL" id="CP001096">
    <property type="protein sequence ID" value="ACF02150.1"/>
    <property type="molecule type" value="Genomic_DNA"/>
</dbReference>
<dbReference type="RefSeq" id="WP_011158778.1">
    <property type="nucleotide sequence ID" value="NC_011004.1"/>
</dbReference>
<dbReference type="SMR" id="B3QBW3"/>
<dbReference type="GeneID" id="66894319"/>
<dbReference type="KEGG" id="rpt:Rpal_3650"/>
<dbReference type="HOGENOM" id="CLU_065898_2_2_5"/>
<dbReference type="OrthoDB" id="9809045at2"/>
<dbReference type="Proteomes" id="UP000001725">
    <property type="component" value="Chromosome"/>
</dbReference>
<dbReference type="GO" id="GO:0015935">
    <property type="term" value="C:small ribosomal subunit"/>
    <property type="evidence" value="ECO:0007669"/>
    <property type="project" value="InterPro"/>
</dbReference>
<dbReference type="GO" id="GO:0019843">
    <property type="term" value="F:rRNA binding"/>
    <property type="evidence" value="ECO:0007669"/>
    <property type="project" value="UniProtKB-UniRule"/>
</dbReference>
<dbReference type="GO" id="GO:0003735">
    <property type="term" value="F:structural constituent of ribosome"/>
    <property type="evidence" value="ECO:0007669"/>
    <property type="project" value="InterPro"/>
</dbReference>
<dbReference type="GO" id="GO:0006412">
    <property type="term" value="P:translation"/>
    <property type="evidence" value="ECO:0007669"/>
    <property type="project" value="UniProtKB-UniRule"/>
</dbReference>
<dbReference type="FunFam" id="3.30.160.20:FF:000001">
    <property type="entry name" value="30S ribosomal protein S5"/>
    <property type="match status" value="1"/>
</dbReference>
<dbReference type="FunFam" id="3.30.230.10:FF:000002">
    <property type="entry name" value="30S ribosomal protein S5"/>
    <property type="match status" value="1"/>
</dbReference>
<dbReference type="Gene3D" id="3.30.160.20">
    <property type="match status" value="1"/>
</dbReference>
<dbReference type="Gene3D" id="3.30.230.10">
    <property type="match status" value="1"/>
</dbReference>
<dbReference type="HAMAP" id="MF_01307_B">
    <property type="entry name" value="Ribosomal_uS5_B"/>
    <property type="match status" value="1"/>
</dbReference>
<dbReference type="InterPro" id="IPR020568">
    <property type="entry name" value="Ribosomal_Su5_D2-typ_SF"/>
</dbReference>
<dbReference type="InterPro" id="IPR000851">
    <property type="entry name" value="Ribosomal_uS5"/>
</dbReference>
<dbReference type="InterPro" id="IPR005712">
    <property type="entry name" value="Ribosomal_uS5_bac-type"/>
</dbReference>
<dbReference type="InterPro" id="IPR005324">
    <property type="entry name" value="Ribosomal_uS5_C"/>
</dbReference>
<dbReference type="InterPro" id="IPR013810">
    <property type="entry name" value="Ribosomal_uS5_N"/>
</dbReference>
<dbReference type="InterPro" id="IPR018192">
    <property type="entry name" value="Ribosomal_uS5_N_CS"/>
</dbReference>
<dbReference type="InterPro" id="IPR014721">
    <property type="entry name" value="Ribsml_uS5_D2-typ_fold_subgr"/>
</dbReference>
<dbReference type="NCBIfam" id="TIGR01021">
    <property type="entry name" value="rpsE_bact"/>
    <property type="match status" value="1"/>
</dbReference>
<dbReference type="PANTHER" id="PTHR48277">
    <property type="entry name" value="MITOCHONDRIAL RIBOSOMAL PROTEIN S5"/>
    <property type="match status" value="1"/>
</dbReference>
<dbReference type="PANTHER" id="PTHR48277:SF1">
    <property type="entry name" value="MITOCHONDRIAL RIBOSOMAL PROTEIN S5"/>
    <property type="match status" value="1"/>
</dbReference>
<dbReference type="Pfam" id="PF00333">
    <property type="entry name" value="Ribosomal_S5"/>
    <property type="match status" value="1"/>
</dbReference>
<dbReference type="Pfam" id="PF03719">
    <property type="entry name" value="Ribosomal_S5_C"/>
    <property type="match status" value="1"/>
</dbReference>
<dbReference type="SUPFAM" id="SSF54768">
    <property type="entry name" value="dsRNA-binding domain-like"/>
    <property type="match status" value="1"/>
</dbReference>
<dbReference type="SUPFAM" id="SSF54211">
    <property type="entry name" value="Ribosomal protein S5 domain 2-like"/>
    <property type="match status" value="1"/>
</dbReference>
<dbReference type="PROSITE" id="PS00585">
    <property type="entry name" value="RIBOSOMAL_S5"/>
    <property type="match status" value="1"/>
</dbReference>
<dbReference type="PROSITE" id="PS50881">
    <property type="entry name" value="S5_DSRBD"/>
    <property type="match status" value="1"/>
</dbReference>
<organism>
    <name type="scientific">Rhodopseudomonas palustris (strain TIE-1)</name>
    <dbReference type="NCBI Taxonomy" id="395960"/>
    <lineage>
        <taxon>Bacteria</taxon>
        <taxon>Pseudomonadati</taxon>
        <taxon>Pseudomonadota</taxon>
        <taxon>Alphaproteobacteria</taxon>
        <taxon>Hyphomicrobiales</taxon>
        <taxon>Nitrobacteraceae</taxon>
        <taxon>Rhodopseudomonas</taxon>
    </lineage>
</organism>
<comment type="function">
    <text evidence="1">With S4 and S12 plays an important role in translational accuracy.</text>
</comment>
<comment type="function">
    <text evidence="1">Located at the back of the 30S subunit body where it stabilizes the conformation of the head with respect to the body.</text>
</comment>
<comment type="subunit">
    <text evidence="1">Part of the 30S ribosomal subunit. Contacts proteins S4 and S8.</text>
</comment>
<comment type="domain">
    <text>The N-terminal domain interacts with the head of the 30S subunit; the C-terminal domain interacts with the body and contacts protein S4. The interaction surface between S4 and S5 is involved in control of translational fidelity.</text>
</comment>
<comment type="similarity">
    <text evidence="1">Belongs to the universal ribosomal protein uS5 family.</text>
</comment>
<reference key="1">
    <citation type="submission" date="2008-05" db="EMBL/GenBank/DDBJ databases">
        <title>Complete sequence of Rhodopseudomonas palustris TIE-1.</title>
        <authorList>
            <consortium name="US DOE Joint Genome Institute"/>
            <person name="Lucas S."/>
            <person name="Copeland A."/>
            <person name="Lapidus A."/>
            <person name="Glavina del Rio T."/>
            <person name="Dalin E."/>
            <person name="Tice H."/>
            <person name="Pitluck S."/>
            <person name="Chain P."/>
            <person name="Malfatti S."/>
            <person name="Shin M."/>
            <person name="Vergez L."/>
            <person name="Lang D."/>
            <person name="Schmutz J."/>
            <person name="Larimer F."/>
            <person name="Land M."/>
            <person name="Hauser L."/>
            <person name="Kyrpides N."/>
            <person name="Mikhailova N."/>
            <person name="Emerson D."/>
            <person name="Newman D.K."/>
            <person name="Roden E."/>
            <person name="Richardson P."/>
        </authorList>
    </citation>
    <scope>NUCLEOTIDE SEQUENCE [LARGE SCALE GENOMIC DNA]</scope>
    <source>
        <strain>TIE-1</strain>
    </source>
</reference>
<gene>
    <name evidence="1" type="primary">rpsE</name>
    <name type="ordered locus">Rpal_3650</name>
</gene>
<name>RS5_RHOPT</name>